<proteinExistence type="inferred from homology"/>
<organism>
    <name type="scientific">Shigella sonnei (strain Ss046)</name>
    <dbReference type="NCBI Taxonomy" id="300269"/>
    <lineage>
        <taxon>Bacteria</taxon>
        <taxon>Pseudomonadati</taxon>
        <taxon>Pseudomonadota</taxon>
        <taxon>Gammaproteobacteria</taxon>
        <taxon>Enterobacterales</taxon>
        <taxon>Enterobacteriaceae</taxon>
        <taxon>Shigella</taxon>
    </lineage>
</organism>
<reference key="1">
    <citation type="journal article" date="2005" name="Nucleic Acids Res.">
        <title>Genome dynamics and diversity of Shigella species, the etiologic agents of bacillary dysentery.</title>
        <authorList>
            <person name="Yang F."/>
            <person name="Yang J."/>
            <person name="Zhang X."/>
            <person name="Chen L."/>
            <person name="Jiang Y."/>
            <person name="Yan Y."/>
            <person name="Tang X."/>
            <person name="Wang J."/>
            <person name="Xiong Z."/>
            <person name="Dong J."/>
            <person name="Xue Y."/>
            <person name="Zhu Y."/>
            <person name="Xu X."/>
            <person name="Sun L."/>
            <person name="Chen S."/>
            <person name="Nie H."/>
            <person name="Peng J."/>
            <person name="Xu J."/>
            <person name="Wang Y."/>
            <person name="Yuan Z."/>
            <person name="Wen Y."/>
            <person name="Yao Z."/>
            <person name="Shen Y."/>
            <person name="Qiang B."/>
            <person name="Hou Y."/>
            <person name="Yu J."/>
            <person name="Jin Q."/>
        </authorList>
    </citation>
    <scope>NUCLEOTIDE SEQUENCE [LARGE SCALE GENOMIC DNA]</scope>
    <source>
        <strain>Ss046</strain>
    </source>
</reference>
<protein>
    <recommendedName>
        <fullName evidence="1">UPF0370 protein YpfN</fullName>
    </recommendedName>
</protein>
<sequence length="66" mass="8071">MDWLAKYWWILVIVFLVGVLLNVIKDLKRVDHKKFLANKPELPPHRDFNDKWDDDDDWPKKDQPKK</sequence>
<feature type="chain" id="PRO_0000244553" description="UPF0370 protein YpfN">
    <location>
        <begin position="1"/>
        <end position="66"/>
    </location>
</feature>
<feature type="transmembrane region" description="Helical" evidence="1">
    <location>
        <begin position="4"/>
        <end position="24"/>
    </location>
</feature>
<feature type="region of interest" description="Disordered" evidence="2">
    <location>
        <begin position="39"/>
        <end position="66"/>
    </location>
</feature>
<feature type="compositionally biased region" description="Basic and acidic residues" evidence="2">
    <location>
        <begin position="42"/>
        <end position="51"/>
    </location>
</feature>
<dbReference type="EMBL" id="CP000038">
    <property type="protein sequence ID" value="AAZ89182.1"/>
    <property type="status" value="ALT_INIT"/>
    <property type="molecule type" value="Genomic_DNA"/>
</dbReference>
<dbReference type="RefSeq" id="WP_000383836.1">
    <property type="nucleotide sequence ID" value="NC_007384.1"/>
</dbReference>
<dbReference type="SMR" id="Q3YZ80"/>
<dbReference type="KEGG" id="ssn:SSON_2553"/>
<dbReference type="HOGENOM" id="CLU_198936_0_0_6"/>
<dbReference type="Proteomes" id="UP000002529">
    <property type="component" value="Chromosome"/>
</dbReference>
<dbReference type="GO" id="GO:0005886">
    <property type="term" value="C:plasma membrane"/>
    <property type="evidence" value="ECO:0007669"/>
    <property type="project" value="UniProtKB-SubCell"/>
</dbReference>
<dbReference type="HAMAP" id="MF_01566">
    <property type="entry name" value="UPF0370"/>
    <property type="match status" value="1"/>
</dbReference>
<dbReference type="InterPro" id="IPR020910">
    <property type="entry name" value="UPF0370"/>
</dbReference>
<dbReference type="NCBIfam" id="NF010185">
    <property type="entry name" value="PRK13664.1"/>
    <property type="match status" value="1"/>
</dbReference>
<dbReference type="Pfam" id="PF13980">
    <property type="entry name" value="UPF0370"/>
    <property type="match status" value="1"/>
</dbReference>
<accession>Q3YZ80</accession>
<gene>
    <name evidence="1" type="primary">ypfN</name>
    <name type="ordered locus">SSON_2553</name>
</gene>
<evidence type="ECO:0000255" key="1">
    <source>
        <dbReference type="HAMAP-Rule" id="MF_01566"/>
    </source>
</evidence>
<evidence type="ECO:0000256" key="2">
    <source>
        <dbReference type="SAM" id="MobiDB-lite"/>
    </source>
</evidence>
<evidence type="ECO:0000305" key="3"/>
<name>YPFN_SHISS</name>
<keyword id="KW-1003">Cell membrane</keyword>
<keyword id="KW-0472">Membrane</keyword>
<keyword id="KW-1185">Reference proteome</keyword>
<keyword id="KW-0812">Transmembrane</keyword>
<keyword id="KW-1133">Transmembrane helix</keyword>
<comment type="subcellular location">
    <subcellularLocation>
        <location evidence="1">Cell membrane</location>
        <topology evidence="1">Single-pass membrane protein</topology>
    </subcellularLocation>
</comment>
<comment type="similarity">
    <text evidence="1">Belongs to the UPF0370 family.</text>
</comment>
<comment type="sequence caution" evidence="3">
    <conflict type="erroneous initiation">
        <sequence resource="EMBL-CDS" id="AAZ89182"/>
    </conflict>
</comment>